<accession>E7FHX4</accession>
<accession>Q7LWY2</accession>
<accession>Q9V301</accession>
<reference key="1">
    <citation type="journal article" date="1999" name="Proc. Natl. Acad. Sci. U.S.A.">
        <title>A Holliday junction resolvase from Pyrococcus furiosus: functional similarity to Escherichia coli RuvC provides evidence for conserved mechanism of homologous recombination in Bacteria, Eukarya, and Archaea.</title>
        <authorList>
            <person name="Komori K."/>
            <person name="Sakae S."/>
            <person name="Shinagawa H."/>
            <person name="Morikawa K."/>
            <person name="Ishino Y."/>
        </authorList>
    </citation>
    <scope>NUCLEOTIDE SEQUENCE [GENOMIC DNA]</scope>
    <scope>FUNCTION AS A HOLLIDAY JUNCTION ENDONUCLEASE</scope>
    <scope>INTERACTION WITH PCNA</scope>
    <scope>SUBUNIT</scope>
    <scope>DNA-BINDING</scope>
    <source>
        <strain>ATCC 43587 / DSM 3638 / JCM 8422 / Vc1</strain>
    </source>
</reference>
<reference key="2">
    <citation type="journal article" date="1999" name="Genetics">
        <title>Divergence of the hyperthermophilic archaea Pyrococcus furiosus and P. horikoshii inferred from complete genomic sequences.</title>
        <authorList>
            <person name="Maeder D.L."/>
            <person name="Weiss R.B."/>
            <person name="Dunn D.M."/>
            <person name="Cherry J.L."/>
            <person name="Gonzalez J.M."/>
            <person name="DiRuggiero J."/>
            <person name="Robb F.T."/>
        </authorList>
    </citation>
    <scope>NUCLEOTIDE SEQUENCE [LARGE SCALE GENOMIC DNA]</scope>
    <source>
        <strain>ATCC 43587 / DSM 3638 / JCM 8422 / Vc1</strain>
    </source>
</reference>
<reference key="3">
    <citation type="journal article" date="2000" name="J. Biol. Chem.">
        <title>Both RadA and RadB are involved in homologous recombination in Pyrococcus furiosus.</title>
        <authorList>
            <person name="Komori K."/>
            <person name="Miyata T."/>
            <person name="DiRuggiero J."/>
            <person name="Holley-Shanks R."/>
            <person name="Hayashi I."/>
            <person name="Cann I.K.O."/>
            <person name="Mayanagi K."/>
            <person name="Shinagawa H."/>
            <person name="Ishino Y."/>
        </authorList>
    </citation>
    <scope>ACTIVITY REGULATION</scope>
    <scope>INTERACTION WITH RADB</scope>
    <scope>SUBUNIT</scope>
    <source>
        <strain>ATCC 43587 / DSM 3638 / JCM 8422 / Vc1</strain>
    </source>
</reference>
<reference key="4">
    <citation type="journal article" date="2000" name="J. Biol. Chem.">
        <title>Mutational analysis of the Pyrococcus furiosus holliday junction resolvase hjc revealed functionally important residues for dimer formation, junction DNA binding, and cleavage activities.</title>
        <authorList>
            <person name="Komori K."/>
            <person name="Sakae S."/>
            <person name="Daiyasu H."/>
            <person name="Toh H."/>
            <person name="Morikawa K."/>
            <person name="Shinagawa H."/>
            <person name="Ishino Y."/>
        </authorList>
    </citation>
    <scope>FUNCTION</scope>
    <scope>SUBUNIT</scope>
    <scope>DNA-BINDING</scope>
    <scope>MUTAGENESIS OF GLU-9; ARG-10; GLU-11; PHE-21; ARG-25; ASP-33; GLU-46; LYS-48; TYR-56; PHE-68; PHE-72; LYS-81; PHE-89 AND GLU-110</scope>
</reference>
<reference key="5">
    <citation type="journal article" date="2000" name="Nucleic Acids Res.">
        <title>Biochemical characterization of the hjc holliday junction resolvase of Pyrococcus furiosus.</title>
        <authorList>
            <person name="Komori K."/>
            <person name="Sakae S."/>
            <person name="Fujikane R."/>
            <person name="Morikawa K."/>
            <person name="Shinagawa H."/>
            <person name="Ishino Y."/>
        </authorList>
    </citation>
    <scope>FUNCTION</scope>
    <scope>CATALYTIC ACTIVITY</scope>
    <scope>BIOPHYSICOCHEMICAL PROPERTIES</scope>
    <scope>COFACTOR</scope>
    <scope>DNA-BINDING</scope>
    <source>
        <strain>ATCC 43587 / DSM 3638 / JCM 8422 / Vc1</strain>
    </source>
</reference>
<reference key="6">
    <citation type="journal article" date="2001" name="J. Biol. Chem.">
        <title>Dissection of the regional roles of the archaeal Holliday junction resolvase Hjc by structural and mutational analyses.</title>
        <authorList>
            <person name="Nishino T."/>
            <person name="Komori K."/>
            <person name="Ishino Y."/>
            <person name="Morikawa K."/>
        </authorList>
    </citation>
    <scope>X-RAY CRYSTALLOGRAPHY (2.16 ANGSTROMS)</scope>
    <scope>SUBUNIT</scope>
    <scope>MUTAGENESIS OF 3-ARG-LYS-4 AND ASP-33</scope>
</reference>
<reference key="7">
    <citation type="journal article" date="2001" name="Structure">
        <title>Crystal structure of the archaeal holliday junction resolvase Hjc and implications for DNA recognition.</title>
        <authorList>
            <person name="Nishino T."/>
            <person name="Komori K."/>
            <person name="Tsuchiya D."/>
            <person name="Ishino Y."/>
            <person name="Morikawa K."/>
        </authorList>
    </citation>
    <scope>X-RAY CRYSTALLOGRAPHY (2.00 ANGSTROMS)</scope>
    <scope>SUBUNIT</scope>
    <scope>MUTAGENESIS OF 1-MET--GLY-5; 30-LYS-LYS-31 AND 51-LYS-LYS-52</scope>
</reference>
<gene>
    <name evidence="2" type="primary">hjc</name>
    <name type="ordered locus">PF1503</name>
</gene>
<evidence type="ECO:0000255" key="1"/>
<evidence type="ECO:0000255" key="2">
    <source>
        <dbReference type="HAMAP-Rule" id="MF_01490"/>
    </source>
</evidence>
<evidence type="ECO:0000269" key="3">
    <source>
    </source>
</evidence>
<evidence type="ECO:0000269" key="4">
    <source>
    </source>
</evidence>
<evidence type="ECO:0000269" key="5">
    <source>
    </source>
</evidence>
<evidence type="ECO:0000269" key="6">
    <source>
    </source>
</evidence>
<evidence type="ECO:0000269" key="7">
    <source>
    </source>
</evidence>
<evidence type="ECO:0000269" key="8">
    <source>
    </source>
</evidence>
<evidence type="ECO:0000303" key="9">
    <source>
    </source>
</evidence>
<evidence type="ECO:0000303" key="10">
    <source>
    </source>
</evidence>
<evidence type="ECO:0007829" key="11">
    <source>
        <dbReference type="PDB" id="1GEF"/>
    </source>
</evidence>
<sequence length="123" mass="13766">MYRKGAQAERELIKLLEKHGFAVVRSAGSKKVDLVAGNGKKYLCIEVKVTKKDHLYVGKRDMGRLIEFSRRFGGIPVLAVKFLNVGWRFIEVSPKIEKFVFTPSSGVSLEVLLGIQKTLEGKS</sequence>
<dbReference type="EC" id="3.1.21.10" evidence="2"/>
<dbReference type="EMBL" id="AB023635">
    <property type="protein sequence ID" value="BAA82839.1"/>
    <property type="molecule type" value="Genomic_DNA"/>
</dbReference>
<dbReference type="EMBL" id="AE009950">
    <property type="protein sequence ID" value="AAL81627.1"/>
    <property type="molecule type" value="Genomic_DNA"/>
</dbReference>
<dbReference type="RefSeq" id="WP_011012650.1">
    <property type="nucleotide sequence ID" value="NZ_CP023154.1"/>
</dbReference>
<dbReference type="PDB" id="1GEF">
    <property type="method" value="X-ray"/>
    <property type="resolution" value="2.00 A"/>
    <property type="chains" value="A/B/D/E=1-123"/>
</dbReference>
<dbReference type="PDB" id="1IPI">
    <property type="method" value="X-ray"/>
    <property type="resolution" value="2.16 A"/>
    <property type="chains" value="A/B=1-123"/>
</dbReference>
<dbReference type="PDBsum" id="1GEF"/>
<dbReference type="PDBsum" id="1IPI"/>
<dbReference type="SMR" id="E7FHX4"/>
<dbReference type="STRING" id="186497.PF1503"/>
<dbReference type="PaxDb" id="186497-PF1503"/>
<dbReference type="GeneID" id="41713321"/>
<dbReference type="KEGG" id="pfu:PF1503"/>
<dbReference type="PATRIC" id="fig|186497.12.peg.1566"/>
<dbReference type="eggNOG" id="arCOG00919">
    <property type="taxonomic scope" value="Archaea"/>
</dbReference>
<dbReference type="HOGENOM" id="CLU_139546_2_0_2"/>
<dbReference type="OrthoDB" id="34330at2157"/>
<dbReference type="PhylomeDB" id="E7FHX4"/>
<dbReference type="BRENDA" id="3.1.21.10">
    <property type="organism ID" value="5243"/>
</dbReference>
<dbReference type="EvolutionaryTrace" id="E7FHX4"/>
<dbReference type="Proteomes" id="UP000001013">
    <property type="component" value="Chromosome"/>
</dbReference>
<dbReference type="GO" id="GO:0048476">
    <property type="term" value="C:Holliday junction resolvase complex"/>
    <property type="evidence" value="ECO:0000315"/>
    <property type="project" value="CACAO"/>
</dbReference>
<dbReference type="GO" id="GO:0008821">
    <property type="term" value="F:crossover junction DNA endonuclease activity"/>
    <property type="evidence" value="ECO:0007669"/>
    <property type="project" value="UniProtKB-UniRule"/>
</dbReference>
<dbReference type="GO" id="GO:0003677">
    <property type="term" value="F:DNA binding"/>
    <property type="evidence" value="ECO:0007669"/>
    <property type="project" value="UniProtKB-KW"/>
</dbReference>
<dbReference type="GO" id="GO:0000287">
    <property type="term" value="F:magnesium ion binding"/>
    <property type="evidence" value="ECO:0007669"/>
    <property type="project" value="UniProtKB-UniRule"/>
</dbReference>
<dbReference type="GO" id="GO:0006310">
    <property type="term" value="P:DNA recombination"/>
    <property type="evidence" value="ECO:0007669"/>
    <property type="project" value="UniProtKB-UniRule"/>
</dbReference>
<dbReference type="GO" id="GO:0006281">
    <property type="term" value="P:DNA repair"/>
    <property type="evidence" value="ECO:0007669"/>
    <property type="project" value="UniProtKB-UniRule"/>
</dbReference>
<dbReference type="CDD" id="cd00523">
    <property type="entry name" value="Holliday_junction_resolvase"/>
    <property type="match status" value="1"/>
</dbReference>
<dbReference type="Gene3D" id="3.40.1350.10">
    <property type="match status" value="1"/>
</dbReference>
<dbReference type="HAMAP" id="MF_01490">
    <property type="entry name" value="HJ_Resolv_Hjc"/>
    <property type="match status" value="1"/>
</dbReference>
<dbReference type="InterPro" id="IPR002732">
    <property type="entry name" value="Hjc"/>
</dbReference>
<dbReference type="InterPro" id="IPR014428">
    <property type="entry name" value="Hjc_arc"/>
</dbReference>
<dbReference type="InterPro" id="IPR011335">
    <property type="entry name" value="Restrct_endonuc-II-like"/>
</dbReference>
<dbReference type="InterPro" id="IPR011856">
    <property type="entry name" value="tRNA_endonuc-like_dom_sf"/>
</dbReference>
<dbReference type="NCBIfam" id="NF040854">
    <property type="entry name" value="Hol_resolv_Hjc"/>
    <property type="match status" value="1"/>
</dbReference>
<dbReference type="PANTHER" id="PTHR39651">
    <property type="entry name" value="HOLLIDAY JUNCTION RESOLVASE HJC"/>
    <property type="match status" value="1"/>
</dbReference>
<dbReference type="PANTHER" id="PTHR39651:SF1">
    <property type="entry name" value="HOLLIDAY JUNCTION RESOLVASE HJC"/>
    <property type="match status" value="1"/>
</dbReference>
<dbReference type="Pfam" id="PF01870">
    <property type="entry name" value="Hjc"/>
    <property type="match status" value="1"/>
</dbReference>
<dbReference type="PIRSF" id="PIRSF004985">
    <property type="entry name" value="Hlld_jn_rslvs_ar"/>
    <property type="match status" value="1"/>
</dbReference>
<dbReference type="SUPFAM" id="SSF52980">
    <property type="entry name" value="Restriction endonuclease-like"/>
    <property type="match status" value="1"/>
</dbReference>
<name>HJC_PYRFU</name>
<feature type="chain" id="PRO_0000429156" description="Crossover junction endodeoxyribonuclease Hjc">
    <location>
        <begin position="1"/>
        <end position="123"/>
    </location>
</feature>
<feature type="active site" evidence="2">
    <location>
        <position position="29"/>
    </location>
</feature>
<feature type="binding site" evidence="2">
    <location>
        <position position="9"/>
    </location>
    <ligand>
        <name>Mg(2+)</name>
        <dbReference type="ChEBI" id="CHEBI:18420"/>
    </ligand>
</feature>
<feature type="binding site" evidence="2">
    <location>
        <position position="33"/>
    </location>
    <ligand>
        <name>Mg(2+)</name>
        <dbReference type="ChEBI" id="CHEBI:18420"/>
    </ligand>
</feature>
<feature type="binding site" evidence="2">
    <location>
        <position position="46"/>
    </location>
    <ligand>
        <name>Mg(2+)</name>
        <dbReference type="ChEBI" id="CHEBI:18420"/>
    </ligand>
</feature>
<feature type="site" description="Transition state stabilizer" evidence="1">
    <location>
        <position position="48"/>
    </location>
</feature>
<feature type="mutagenesis site" description="No Holliday junction (HJ) cleavage, does not bind HJ DNA." evidence="7">
    <location>
        <begin position="1"/>
        <end position="5"/>
    </location>
</feature>
<feature type="mutagenesis site" description="20-fold decrease in HJ cleavage, decreased binding to HJ DNA." evidence="8">
    <original>RK</original>
    <variation>AA</variation>
    <location>
        <begin position="3"/>
        <end position="4"/>
    </location>
</feature>
<feature type="mutagenesis site" description="No HJ cleavage." evidence="5">
    <original>E</original>
    <variation>A</variation>
    <location>
        <position position="9"/>
    </location>
</feature>
<feature type="mutagenesis site" description="No HJ cleavage." evidence="5">
    <original>R</original>
    <variation>A</variation>
    <location>
        <position position="10"/>
    </location>
</feature>
<feature type="mutagenesis site" description="Wild-type HJ cleavage." evidence="5">
    <original>E</original>
    <variation>A</variation>
    <location>
        <position position="11"/>
    </location>
</feature>
<feature type="mutagenesis site" description="Wild-type HJ cleavage." evidence="5">
    <original>F</original>
    <variation>A</variation>
    <location>
        <position position="21"/>
    </location>
</feature>
<feature type="mutagenesis site" description="No HJ cleavage." evidence="5">
    <original>R</original>
    <variation>A</variation>
    <location>
        <position position="25"/>
    </location>
</feature>
<feature type="mutagenesis site" description="No HJ cleavage, binds HJ DNA about 50%." evidence="7">
    <original>KK</original>
    <variation>AA</variation>
    <location>
        <begin position="30"/>
        <end position="31"/>
    </location>
</feature>
<feature type="mutagenesis site" description="No HJ cleavage. Binds HJ DNA normally." evidence="5 8">
    <original>D</original>
    <variation>A</variation>
    <location>
        <position position="33"/>
    </location>
</feature>
<feature type="mutagenesis site" description="No HJ cleavage." evidence="5">
    <original>E</original>
    <variation>A</variation>
    <location>
        <position position="46"/>
    </location>
</feature>
<feature type="mutagenesis site" description="No HJ cleavage." evidence="5">
    <original>K</original>
    <variation>A</variation>
    <location>
        <position position="48"/>
    </location>
</feature>
<feature type="mutagenesis site" description="10% HJ cleavage, binds HJ DNA about 50%." evidence="7">
    <original>KK</original>
    <variation>AA</variation>
    <location>
        <begin position="51"/>
        <end position="52"/>
    </location>
</feature>
<feature type="mutagenesis site" description="30% HJ cleavage." evidence="5">
    <original>Y</original>
    <variation>A</variation>
    <location>
        <position position="56"/>
    </location>
</feature>
<feature type="mutagenesis site" description="No HJ cleavage. Dimerizes poorly." evidence="5">
    <original>F</original>
    <variation>A</variation>
    <location>
        <position position="68"/>
    </location>
</feature>
<feature type="mutagenesis site" description="No HJ cleavage; at very high levels altered cleavage patterns. Dimerizes poorly." evidence="5">
    <original>F</original>
    <variation>A</variation>
    <location>
        <position position="72"/>
    </location>
</feature>
<feature type="mutagenesis site" description="No HJ cleavage. Slight decrease in DNA binding." evidence="5">
    <original>K</original>
    <variation>A</variation>
    <location>
        <position position="81"/>
    </location>
</feature>
<feature type="mutagenesis site" description="Wild-type HJ cleavage." evidence="5">
    <original>F</original>
    <variation>A</variation>
    <location>
        <position position="89"/>
    </location>
</feature>
<feature type="mutagenesis site" description="Wild-type HJ cleavage. Slight decrease in DNA binding." evidence="5">
    <original>E</original>
    <variation>A</variation>
    <location>
        <position position="110"/>
    </location>
</feature>
<feature type="helix" evidence="11">
    <location>
        <begin position="3"/>
        <end position="18"/>
    </location>
</feature>
<feature type="strand" evidence="11">
    <location>
        <begin position="22"/>
        <end position="26"/>
    </location>
</feature>
<feature type="helix" evidence="11">
    <location>
        <begin position="27"/>
        <end position="29"/>
    </location>
</feature>
<feature type="strand" evidence="11">
    <location>
        <begin position="33"/>
        <end position="37"/>
    </location>
</feature>
<feature type="strand" evidence="11">
    <location>
        <begin position="42"/>
        <end position="53"/>
    </location>
</feature>
<feature type="strand" evidence="11">
    <location>
        <begin position="55"/>
        <end position="57"/>
    </location>
</feature>
<feature type="helix" evidence="11">
    <location>
        <begin position="59"/>
        <end position="72"/>
    </location>
</feature>
<feature type="strand" evidence="11">
    <location>
        <begin position="75"/>
        <end position="82"/>
    </location>
</feature>
<feature type="turn" evidence="11">
    <location>
        <begin position="83"/>
        <end position="85"/>
    </location>
</feature>
<feature type="strand" evidence="11">
    <location>
        <begin position="86"/>
        <end position="91"/>
    </location>
</feature>
<feature type="strand" evidence="11">
    <location>
        <begin position="99"/>
        <end position="101"/>
    </location>
</feature>
<feature type="helix" evidence="11">
    <location>
        <begin position="103"/>
        <end position="105"/>
    </location>
</feature>
<feature type="helix" evidence="11">
    <location>
        <begin position="109"/>
        <end position="112"/>
    </location>
</feature>
<feature type="helix" evidence="11">
    <location>
        <begin position="115"/>
        <end position="117"/>
    </location>
</feature>
<protein>
    <recommendedName>
        <fullName evidence="2">Crossover junction endodeoxyribonuclease Hjc</fullName>
        <shortName evidence="2 10">Hjc</shortName>
        <ecNumber evidence="2">3.1.21.10</ecNumber>
    </recommendedName>
    <alternativeName>
        <fullName evidence="2 9">Holliday junction resolvase Hjc</fullName>
    </alternativeName>
</protein>
<keyword id="KW-0002">3D-structure</keyword>
<keyword id="KW-0227">DNA damage</keyword>
<keyword id="KW-0233">DNA recombination</keyword>
<keyword id="KW-0234">DNA repair</keyword>
<keyword id="KW-0238">DNA-binding</keyword>
<keyword id="KW-0255">Endonuclease</keyword>
<keyword id="KW-0378">Hydrolase</keyword>
<keyword id="KW-0460">Magnesium</keyword>
<keyword id="KW-0479">Metal-binding</keyword>
<keyword id="KW-0540">Nuclease</keyword>
<keyword id="KW-1185">Reference proteome</keyword>
<proteinExistence type="evidence at protein level"/>
<comment type="function">
    <text evidence="2 3 5 6">A structure-specific endonuclease that resolves Holliday junction (HJ) intermediates during genetic recombination. Cleaves 4-way DNA junctions introducing paired nicks in opposing strands, leaving a 5'-terminal phosphate and a 3'-terminal hydroxyl group that are subsequently ligated to produce recombinant products. Cleaves both mobile and immobile junctions. Binds 4-way junction DNA, a synthetic Hj, binding is not competed by dsDNA.</text>
</comment>
<comment type="catalytic activity">
    <reaction evidence="2 6">
        <text>Endonucleolytic cleavage at a junction such as a reciprocal single-stranded crossover between two homologous DNA duplexes (Holliday junction).</text>
        <dbReference type="EC" id="3.1.21.10"/>
    </reaction>
</comment>
<comment type="cofactor">
    <cofactor evidence="6">
        <name>Mg(2+)</name>
        <dbReference type="ChEBI" id="CHEBI:18420"/>
    </cofactor>
    <cofactor evidence="6">
        <name>Mn(2+)</name>
        <dbReference type="ChEBI" id="CHEBI:29035"/>
    </cofactor>
    <text evidence="6">Divalent cations, Mg(2+) has higher activity than Mn(2+).</text>
</comment>
<comment type="activity regulation">
    <text evidence="4">Cleavage inhibited by RadB in the absence (but not presence) of ATP.</text>
</comment>
<comment type="biophysicochemical properties">
    <phDependence>
        <text evidence="6">Optimum pH is 8-10.</text>
    </phDependence>
    <temperatureDependence>
        <text evidence="6">Optimum temperature is 70-75 degrees Celsius, enzyme is fully active after 16 hours at 90 degrees Celsius.</text>
    </temperatureDependence>
</comment>
<comment type="subunit">
    <text evidence="2 3 4 5 7 8">Homodimer. Probably interacts with PCNA and RadB.</text>
</comment>
<comment type="similarity">
    <text evidence="2">Belongs to the Holliday junction resolvase Hjc family.</text>
</comment>
<organism>
    <name type="scientific">Pyrococcus furiosus (strain ATCC 43587 / DSM 3638 / JCM 8422 / Vc1)</name>
    <dbReference type="NCBI Taxonomy" id="186497"/>
    <lineage>
        <taxon>Archaea</taxon>
        <taxon>Methanobacteriati</taxon>
        <taxon>Methanobacteriota</taxon>
        <taxon>Thermococci</taxon>
        <taxon>Thermococcales</taxon>
        <taxon>Thermococcaceae</taxon>
        <taxon>Pyrococcus</taxon>
    </lineage>
</organism>